<reference key="1">
    <citation type="journal article" date="2005" name="J. Bacteriol.">
        <title>Insights into genome plasticity and pathogenicity of the plant pathogenic Bacterium Xanthomonas campestris pv. vesicatoria revealed by the complete genome sequence.</title>
        <authorList>
            <person name="Thieme F."/>
            <person name="Koebnik R."/>
            <person name="Bekel T."/>
            <person name="Berger C."/>
            <person name="Boch J."/>
            <person name="Buettner D."/>
            <person name="Caldana C."/>
            <person name="Gaigalat L."/>
            <person name="Goesmann A."/>
            <person name="Kay S."/>
            <person name="Kirchner O."/>
            <person name="Lanz C."/>
            <person name="Linke B."/>
            <person name="McHardy A.C."/>
            <person name="Meyer F."/>
            <person name="Mittenhuber G."/>
            <person name="Nies D.H."/>
            <person name="Niesbach-Kloesgen U."/>
            <person name="Patschkowski T."/>
            <person name="Rueckert C."/>
            <person name="Rupp O."/>
            <person name="Schneiker S."/>
            <person name="Schuster S.C."/>
            <person name="Vorhoelter F.J."/>
            <person name="Weber E."/>
            <person name="Puehler A."/>
            <person name="Bonas U."/>
            <person name="Bartels D."/>
            <person name="Kaiser O."/>
        </authorList>
    </citation>
    <scope>NUCLEOTIDE SEQUENCE [LARGE SCALE GENOMIC DNA]</scope>
    <source>
        <strain>85-10</strain>
    </source>
</reference>
<keyword id="KW-0963">Cytoplasm</keyword>
<keyword id="KW-0328">Glycosyltransferase</keyword>
<keyword id="KW-0660">Purine salvage</keyword>
<keyword id="KW-0808">Transferase</keyword>
<feature type="chain" id="PRO_1000000371" description="Adenine phosphoribosyltransferase">
    <location>
        <begin position="1"/>
        <end position="186"/>
    </location>
</feature>
<dbReference type="EC" id="2.4.2.7" evidence="1"/>
<dbReference type="EMBL" id="AM039952">
    <property type="protein sequence ID" value="CAJ24265.1"/>
    <property type="molecule type" value="Genomic_DNA"/>
</dbReference>
<dbReference type="RefSeq" id="WP_011347737.1">
    <property type="nucleotide sequence ID" value="NZ_CP017190.1"/>
</dbReference>
<dbReference type="SMR" id="Q3BSE4"/>
<dbReference type="STRING" id="456327.BJD11_09955"/>
<dbReference type="KEGG" id="xcv:XCV2588"/>
<dbReference type="eggNOG" id="COG0503">
    <property type="taxonomic scope" value="Bacteria"/>
</dbReference>
<dbReference type="HOGENOM" id="CLU_063339_3_0_6"/>
<dbReference type="UniPathway" id="UPA00588">
    <property type="reaction ID" value="UER00646"/>
</dbReference>
<dbReference type="Proteomes" id="UP000007069">
    <property type="component" value="Chromosome"/>
</dbReference>
<dbReference type="GO" id="GO:0005737">
    <property type="term" value="C:cytoplasm"/>
    <property type="evidence" value="ECO:0007669"/>
    <property type="project" value="UniProtKB-SubCell"/>
</dbReference>
<dbReference type="GO" id="GO:0002055">
    <property type="term" value="F:adenine binding"/>
    <property type="evidence" value="ECO:0007669"/>
    <property type="project" value="TreeGrafter"/>
</dbReference>
<dbReference type="GO" id="GO:0003999">
    <property type="term" value="F:adenine phosphoribosyltransferase activity"/>
    <property type="evidence" value="ECO:0007669"/>
    <property type="project" value="UniProtKB-UniRule"/>
</dbReference>
<dbReference type="GO" id="GO:0016208">
    <property type="term" value="F:AMP binding"/>
    <property type="evidence" value="ECO:0007669"/>
    <property type="project" value="TreeGrafter"/>
</dbReference>
<dbReference type="GO" id="GO:0006168">
    <property type="term" value="P:adenine salvage"/>
    <property type="evidence" value="ECO:0007669"/>
    <property type="project" value="InterPro"/>
</dbReference>
<dbReference type="GO" id="GO:0044209">
    <property type="term" value="P:AMP salvage"/>
    <property type="evidence" value="ECO:0007669"/>
    <property type="project" value="UniProtKB-UniRule"/>
</dbReference>
<dbReference type="GO" id="GO:0006166">
    <property type="term" value="P:purine ribonucleoside salvage"/>
    <property type="evidence" value="ECO:0007669"/>
    <property type="project" value="UniProtKB-KW"/>
</dbReference>
<dbReference type="CDD" id="cd06223">
    <property type="entry name" value="PRTases_typeI"/>
    <property type="match status" value="1"/>
</dbReference>
<dbReference type="FunFam" id="3.40.50.2020:FF:000021">
    <property type="entry name" value="Adenine phosphoribosyltransferase"/>
    <property type="match status" value="1"/>
</dbReference>
<dbReference type="Gene3D" id="3.40.50.2020">
    <property type="match status" value="1"/>
</dbReference>
<dbReference type="HAMAP" id="MF_00004">
    <property type="entry name" value="Aden_phosphoribosyltr"/>
    <property type="match status" value="1"/>
</dbReference>
<dbReference type="InterPro" id="IPR005764">
    <property type="entry name" value="Ade_phspho_trans"/>
</dbReference>
<dbReference type="InterPro" id="IPR000836">
    <property type="entry name" value="PRibTrfase_dom"/>
</dbReference>
<dbReference type="InterPro" id="IPR029057">
    <property type="entry name" value="PRTase-like"/>
</dbReference>
<dbReference type="InterPro" id="IPR050054">
    <property type="entry name" value="UPRTase/APRTase"/>
</dbReference>
<dbReference type="NCBIfam" id="TIGR01090">
    <property type="entry name" value="apt"/>
    <property type="match status" value="1"/>
</dbReference>
<dbReference type="NCBIfam" id="NF002634">
    <property type="entry name" value="PRK02304.1-3"/>
    <property type="match status" value="1"/>
</dbReference>
<dbReference type="NCBIfam" id="NF002636">
    <property type="entry name" value="PRK02304.1-5"/>
    <property type="match status" value="1"/>
</dbReference>
<dbReference type="PANTHER" id="PTHR32315">
    <property type="entry name" value="ADENINE PHOSPHORIBOSYLTRANSFERASE"/>
    <property type="match status" value="1"/>
</dbReference>
<dbReference type="PANTHER" id="PTHR32315:SF3">
    <property type="entry name" value="ADENINE PHOSPHORIBOSYLTRANSFERASE"/>
    <property type="match status" value="1"/>
</dbReference>
<dbReference type="Pfam" id="PF00156">
    <property type="entry name" value="Pribosyltran"/>
    <property type="match status" value="1"/>
</dbReference>
<dbReference type="SUPFAM" id="SSF53271">
    <property type="entry name" value="PRTase-like"/>
    <property type="match status" value="1"/>
</dbReference>
<dbReference type="PROSITE" id="PS00103">
    <property type="entry name" value="PUR_PYR_PR_TRANSFER"/>
    <property type="match status" value="1"/>
</dbReference>
<comment type="function">
    <text evidence="1">Catalyzes a salvage reaction resulting in the formation of AMP, that is energically less costly than de novo synthesis.</text>
</comment>
<comment type="catalytic activity">
    <reaction evidence="1">
        <text>AMP + diphosphate = 5-phospho-alpha-D-ribose 1-diphosphate + adenine</text>
        <dbReference type="Rhea" id="RHEA:16609"/>
        <dbReference type="ChEBI" id="CHEBI:16708"/>
        <dbReference type="ChEBI" id="CHEBI:33019"/>
        <dbReference type="ChEBI" id="CHEBI:58017"/>
        <dbReference type="ChEBI" id="CHEBI:456215"/>
        <dbReference type="EC" id="2.4.2.7"/>
    </reaction>
</comment>
<comment type="pathway">
    <text evidence="1">Purine metabolism; AMP biosynthesis via salvage pathway; AMP from adenine: step 1/1.</text>
</comment>
<comment type="subunit">
    <text evidence="1">Homodimer.</text>
</comment>
<comment type="subcellular location">
    <subcellularLocation>
        <location evidence="1">Cytoplasm</location>
    </subcellularLocation>
</comment>
<comment type="similarity">
    <text evidence="1">Belongs to the purine/pyrimidine phosphoribosyltransferase family.</text>
</comment>
<proteinExistence type="inferred from homology"/>
<name>APT_XANE5</name>
<organism>
    <name type="scientific">Xanthomonas euvesicatoria pv. vesicatoria (strain 85-10)</name>
    <name type="common">Xanthomonas campestris pv. vesicatoria</name>
    <dbReference type="NCBI Taxonomy" id="316273"/>
    <lineage>
        <taxon>Bacteria</taxon>
        <taxon>Pseudomonadati</taxon>
        <taxon>Pseudomonadota</taxon>
        <taxon>Gammaproteobacteria</taxon>
        <taxon>Lysobacterales</taxon>
        <taxon>Lysobacteraceae</taxon>
        <taxon>Xanthomonas</taxon>
    </lineage>
</organism>
<evidence type="ECO:0000255" key="1">
    <source>
        <dbReference type="HAMAP-Rule" id="MF_00004"/>
    </source>
</evidence>
<gene>
    <name evidence="1" type="primary">apt</name>
    <name type="ordered locus">XCV2588</name>
</gene>
<accession>Q3BSE4</accession>
<sequence>MTDCSRCAGTTTSGPNHWSERIRDIADFPKQGIVFKDITPLLSDGPDFASALDEMAQPWRTTPLDAVLGIEARGFILGAALARELRTGFVPVRKPGKLPGRTLIQEYALEYGTDRIEMHEDALPRGARVLIVDDVLATGGTLRAALGLAAQLELEVVGAAVLVELQVLQGRQKWANDVPLLATLSY</sequence>
<protein>
    <recommendedName>
        <fullName evidence="1">Adenine phosphoribosyltransferase</fullName>
        <shortName evidence="1">APRT</shortName>
        <ecNumber evidence="1">2.4.2.7</ecNumber>
    </recommendedName>
</protein>